<organism>
    <name type="scientific">Rattus norvegicus</name>
    <name type="common">Rat</name>
    <dbReference type="NCBI Taxonomy" id="10116"/>
    <lineage>
        <taxon>Eukaryota</taxon>
        <taxon>Metazoa</taxon>
        <taxon>Chordata</taxon>
        <taxon>Craniata</taxon>
        <taxon>Vertebrata</taxon>
        <taxon>Euteleostomi</taxon>
        <taxon>Mammalia</taxon>
        <taxon>Eutheria</taxon>
        <taxon>Euarchontoglires</taxon>
        <taxon>Glires</taxon>
        <taxon>Rodentia</taxon>
        <taxon>Myomorpha</taxon>
        <taxon>Muroidea</taxon>
        <taxon>Muridae</taxon>
        <taxon>Murinae</taxon>
        <taxon>Rattus</taxon>
    </lineage>
</organism>
<comment type="function">
    <text evidence="1 5">Downstream effector for Rab11 which regulates Rab11 intracellular membrane trafficking functions such as endocytic recycling, intracellular ciliogenesis and protein export (PubMed:10464283). ATK1-mediated phosphorylation of WDR44 induces binding to Rab11 which activates endocytic recycling of transferrin receptor back to the plasma membrane (PubMed:10464283). When bound to Rab11, prevents the formation of the ciliogenic Rab11-Rabin8/RAB3IP-RAB11FIP3 complex, therefore inhibiting preciliary trafficking and ciliogenesis (By similarity). May participate in neo-synthesized protein export by connecting the endoplasmic reticulum (ER) with the endosomal tubule via direct interactions with the integral ER proteins VAPA or VAPB and the endosomal protein GRAFs (GRAF1/ARHGAP26 or GRAF2/ARHGAP10), which facilitates the transfer of proteins such as E-cadherin, MPP14 and CFTR into a Rab8-Rab10-Rab11-dependent export route (By similarity).</text>
</comment>
<comment type="subunit">
    <text evidence="1 5">Interacts preferentially with the GTP-bound form of RAB11 when membrane-associated (PubMed:10464283). Interacts with GRAF1/ARHGAP26 or GRAF2/ARHGAP10; the interaction connects the endoplasmic reticulum (ER) with the endosomal tubule (By similarity). Interacts with VAPA (via MSP domain) or VAPB (via MSP domain); the interaction connects the ER with the endosomal tubule (By similarity). Does not bind to other Rab and Rho small G proteins (PubMed:10464283).</text>
</comment>
<comment type="subcellular location">
    <subcellularLocation>
        <location evidence="5">Cytoplasm</location>
        <location evidence="5">Cytosol</location>
    </subcellularLocation>
    <subcellularLocation>
        <location evidence="5">Cytoplasm</location>
        <location evidence="5">Perinuclear region</location>
    </subcellularLocation>
    <subcellularLocation>
        <location evidence="5">Endosome membrane</location>
    </subcellularLocation>
    <subcellularLocation>
        <location evidence="5">Golgi apparatus</location>
        <location evidence="5">trans-Golgi network</location>
    </subcellularLocation>
    <text evidence="5">Colocalized with RAB11 along microtubules oriented toward lamellipodia.</text>
</comment>
<comment type="tissue specificity">
    <text evidence="5">Expressed in heart; brain; spleen; lung; liver; muscle and kidney.</text>
</comment>
<comment type="PTM">
    <text evidence="1">Phosphorylated by ATK1; the phosphorylation stabilizes its interaction with RAB11A and RAB11B.</text>
</comment>
<protein>
    <recommendedName>
        <fullName>WD repeat-containing protein 44</fullName>
    </recommendedName>
    <alternativeName>
        <fullName evidence="6">Rabphilin-11</fullName>
        <shortName evidence="3">Rab11BP</shortName>
    </alternativeName>
</protein>
<name>WDR44_RAT</name>
<keyword id="KW-0963">Cytoplasm</keyword>
<keyword id="KW-0903">Direct protein sequencing</keyword>
<keyword id="KW-0967">Endosome</keyword>
<keyword id="KW-0333">Golgi apparatus</keyword>
<keyword id="KW-0472">Membrane</keyword>
<keyword id="KW-0597">Phosphoprotein</keyword>
<keyword id="KW-1185">Reference proteome</keyword>
<keyword id="KW-0677">Repeat</keyword>
<keyword id="KW-0853">WD repeat</keyword>
<proteinExistence type="evidence at protein level"/>
<sequence>MMPLKMCTWGGSYPVGSPGKVGLLSFKETKNTGNKAGNESPVQELRQDVSKKIIECIIEESQKVLQLEDDSLDSKGKGLSDQATASHSVAGTEFSNIPGLLAIQHELQQGSRKADSQNAAEETELETQKCFPSDNNCEKSEKTEDETNNLTEVSSADQLDASKLETEILNKEAVEVKEGDVVNPASSDALSTKDFAAVEEVAPAKPPRHLTPEPDIVASTKKPVPARPPPPTNFPPPRPPPPSRPAPPPRKKKSDLEFEALKTPDLDVPKDNIASDSLLTTNMASESTVRDSLPSLDLASATSGDKIVTAQENGKAPDVQTVAGEVMGPQRPRSNSGRELTDEEILASVMIKNLDTGEEIPLSLAEEKLPTGINPLTPLTLHIMRRTKEYVSNDATQSDDEEKLQSQQTDTDGGRLKQKTTQLKKFLGKSVKRAKHLAEEYGERAINKVKSVRDEVFHTDQDDPSSSDDEGMPYTRPVKFKAAHGFKGPYDFDQIKVVQDLSGEHMGAVWTMKFSHCGRLLASAGQDNIVRIWALKNAFDYFNNMRMKYNTEGRVSPSPSQESLSSSKSDTDMGVCSGTDEDPDDKNAPFRQRPFCKYKGHTADLLDLSWSKNYFLLSSSMDKTVRLWHISRRECLCCFQHIDFVTAIAFHPRDDRYFLSGSLDGKLRLWNIPDKKVALWNEVDGQTKLITAANFCQNGKYAVIGTYDGRCIFYDTEHLKYHTQIHVRSTRGRNKVGRKITGIEPLPGENKILVTSNDSRIRLYDLRDLSLSMKYKGYVNSSSQIKASFSHDFTYLVSGSEDKYVYIWSTYHDLSKFTSVRRDRNDFWEGIKAHNAVVTSAIFAPNPSLMLSLDVQSEKLEGIDKYEDAEVLDNTSTGIVKTDNTEVLLSADFTGAQCFYVKNSFLYP</sequence>
<gene>
    <name evidence="7" type="primary">Wdr44</name>
    <name type="synonym">RPH11</name>
</gene>
<reference key="1">
    <citation type="journal article" date="1999" name="J. Biol. Chem.">
        <title>Rab11BP/Rabphilin-11, a downstream target of rab11 small G protein implicated in vesicle recycling.</title>
        <authorList>
            <person name="Mammoto A."/>
            <person name="Ohtsuka T."/>
            <person name="Hotta I."/>
            <person name="Sasaki T."/>
            <person name="Takai Y."/>
        </authorList>
    </citation>
    <scope>NUCLEOTIDE SEQUENCE [MRNA]</scope>
    <scope>PROTEIN SEQUENCE OF 53-75; 194-216; 701-709; 272-289; 294-306; 488-496; 537-546; 667-688; 740-751; 786-803; 832-856 AND 882-895</scope>
    <scope>FUNCTION</scope>
    <scope>TISSUE SPECIFICITY</scope>
    <scope>SUBCELLULAR LOCATION</scope>
    <source>
        <tissue>Brain</tissue>
    </source>
</reference>
<reference key="2">
    <citation type="journal article" date="2012" name="Nat. Commun.">
        <title>Quantitative maps of protein phosphorylation sites across 14 different rat organs and tissues.</title>
        <authorList>
            <person name="Lundby A."/>
            <person name="Secher A."/>
            <person name="Lage K."/>
            <person name="Nordsborg N.B."/>
            <person name="Dmytriyev A."/>
            <person name="Lundby C."/>
            <person name="Olsen J.V."/>
        </authorList>
    </citation>
    <scope>PHOSPHORYLATION [LARGE SCALE ANALYSIS] AT SER-40; THR-396; SER-398; SER-465; SER-466; SER-467 AND SER-556</scope>
    <scope>IDENTIFICATION BY MASS SPECTROMETRY [LARGE SCALE ANALYSIS]</scope>
</reference>
<dbReference type="EMBL" id="AF130121">
    <property type="protein sequence ID" value="AAF02478.1"/>
    <property type="molecule type" value="mRNA"/>
</dbReference>
<dbReference type="SMR" id="Q9R037"/>
<dbReference type="FunCoup" id="Q9R037">
    <property type="interactions" value="3418"/>
</dbReference>
<dbReference type="STRING" id="10116.ENSRNOP00000074327"/>
<dbReference type="iPTMnet" id="Q9R037"/>
<dbReference type="PhosphoSitePlus" id="Q9R037"/>
<dbReference type="jPOST" id="Q9R037"/>
<dbReference type="PaxDb" id="10116-ENSRNOP00000047275"/>
<dbReference type="UCSC" id="RGD:727965">
    <property type="organism name" value="rat"/>
</dbReference>
<dbReference type="AGR" id="RGD:727965"/>
<dbReference type="RGD" id="727965">
    <property type="gene designation" value="Wdr44"/>
</dbReference>
<dbReference type="eggNOG" id="KOG0283">
    <property type="taxonomic scope" value="Eukaryota"/>
</dbReference>
<dbReference type="InParanoid" id="Q9R037"/>
<dbReference type="PhylomeDB" id="Q9R037"/>
<dbReference type="PRO" id="PR:Q9R037"/>
<dbReference type="Proteomes" id="UP000002494">
    <property type="component" value="Unplaced"/>
</dbReference>
<dbReference type="GO" id="GO:0005829">
    <property type="term" value="C:cytosol"/>
    <property type="evidence" value="ECO:0007669"/>
    <property type="project" value="UniProtKB-SubCell"/>
</dbReference>
<dbReference type="GO" id="GO:0010008">
    <property type="term" value="C:endosome membrane"/>
    <property type="evidence" value="ECO:0000266"/>
    <property type="project" value="RGD"/>
</dbReference>
<dbReference type="GO" id="GO:0005794">
    <property type="term" value="C:Golgi apparatus"/>
    <property type="evidence" value="ECO:0007669"/>
    <property type="project" value="UniProtKB-SubCell"/>
</dbReference>
<dbReference type="GO" id="GO:0005874">
    <property type="term" value="C:microtubule"/>
    <property type="evidence" value="ECO:0000314"/>
    <property type="project" value="RGD"/>
</dbReference>
<dbReference type="GO" id="GO:0048471">
    <property type="term" value="C:perinuclear region of cytoplasm"/>
    <property type="evidence" value="ECO:0000314"/>
    <property type="project" value="RGD"/>
</dbReference>
<dbReference type="GO" id="GO:0140313">
    <property type="term" value="F:molecular sequestering activity"/>
    <property type="evidence" value="ECO:0000250"/>
    <property type="project" value="UniProtKB"/>
</dbReference>
<dbReference type="GO" id="GO:0031267">
    <property type="term" value="F:small GTPase binding"/>
    <property type="evidence" value="ECO:0000314"/>
    <property type="project" value="RGD"/>
</dbReference>
<dbReference type="GO" id="GO:0061824">
    <property type="term" value="P:cytosolic ciliogenesis"/>
    <property type="evidence" value="ECO:0000250"/>
    <property type="project" value="UniProtKB"/>
</dbReference>
<dbReference type="GO" id="GO:1902018">
    <property type="term" value="P:negative regulation of cilium assembly"/>
    <property type="evidence" value="ECO:0000250"/>
    <property type="project" value="UniProtKB"/>
</dbReference>
<dbReference type="GO" id="GO:0030334">
    <property type="term" value="P:regulation of cell migration"/>
    <property type="evidence" value="ECO:0000315"/>
    <property type="project" value="RGD"/>
</dbReference>
<dbReference type="GO" id="GO:0060627">
    <property type="term" value="P:regulation of vesicle-mediated transport"/>
    <property type="evidence" value="ECO:0000250"/>
    <property type="project" value="UniProtKB"/>
</dbReference>
<dbReference type="Gene3D" id="2.130.10.10">
    <property type="entry name" value="YVTN repeat-like/Quinoprotein amine dehydrogenase"/>
    <property type="match status" value="1"/>
</dbReference>
<dbReference type="InterPro" id="IPR020472">
    <property type="entry name" value="G-protein_beta_WD-40_rep"/>
</dbReference>
<dbReference type="InterPro" id="IPR015943">
    <property type="entry name" value="WD40/YVTN_repeat-like_dom_sf"/>
</dbReference>
<dbReference type="InterPro" id="IPR036322">
    <property type="entry name" value="WD40_repeat_dom_sf"/>
</dbReference>
<dbReference type="InterPro" id="IPR001680">
    <property type="entry name" value="WD40_rpt"/>
</dbReference>
<dbReference type="InterPro" id="IPR040324">
    <property type="entry name" value="WDR44/Dgr2"/>
</dbReference>
<dbReference type="PANTHER" id="PTHR14221">
    <property type="entry name" value="WD REPEAT DOMAIN 44"/>
    <property type="match status" value="1"/>
</dbReference>
<dbReference type="PANTHER" id="PTHR14221:SF0">
    <property type="entry name" value="WD REPEAT-CONTAINING PROTEIN 44"/>
    <property type="match status" value="1"/>
</dbReference>
<dbReference type="Pfam" id="PF00400">
    <property type="entry name" value="WD40"/>
    <property type="match status" value="4"/>
</dbReference>
<dbReference type="PRINTS" id="PR00320">
    <property type="entry name" value="GPROTEINBRPT"/>
</dbReference>
<dbReference type="SMART" id="SM00320">
    <property type="entry name" value="WD40"/>
    <property type="match status" value="6"/>
</dbReference>
<dbReference type="SUPFAM" id="SSF50978">
    <property type="entry name" value="WD40 repeat-like"/>
    <property type="match status" value="1"/>
</dbReference>
<dbReference type="PROSITE" id="PS50082">
    <property type="entry name" value="WD_REPEATS_2"/>
    <property type="match status" value="4"/>
</dbReference>
<dbReference type="PROSITE" id="PS50294">
    <property type="entry name" value="WD_REPEATS_REGION"/>
    <property type="match status" value="1"/>
</dbReference>
<evidence type="ECO:0000250" key="1">
    <source>
        <dbReference type="UniProtKB" id="Q5JSH3"/>
    </source>
</evidence>
<evidence type="ECO:0000250" key="2">
    <source>
        <dbReference type="UniProtKB" id="Q6NVE8"/>
    </source>
</evidence>
<evidence type="ECO:0000250" key="3">
    <source>
        <dbReference type="UniProtKB" id="Q9XSC3"/>
    </source>
</evidence>
<evidence type="ECO:0000256" key="4">
    <source>
        <dbReference type="SAM" id="MobiDB-lite"/>
    </source>
</evidence>
<evidence type="ECO:0000269" key="5">
    <source>
    </source>
</evidence>
<evidence type="ECO:0000303" key="6">
    <source>
    </source>
</evidence>
<evidence type="ECO:0000312" key="7">
    <source>
        <dbReference type="RGD" id="727965"/>
    </source>
</evidence>
<evidence type="ECO:0007744" key="8">
    <source>
    </source>
</evidence>
<feature type="chain" id="PRO_0000262771" description="WD repeat-containing protein 44">
    <location>
        <begin position="1"/>
        <end position="908"/>
    </location>
</feature>
<feature type="repeat" description="WD 1">
    <location>
        <begin position="504"/>
        <end position="543"/>
    </location>
</feature>
<feature type="repeat" description="WD 2">
    <location>
        <begin position="600"/>
        <end position="638"/>
    </location>
</feature>
<feature type="repeat" description="WD 3">
    <location>
        <begin position="640"/>
        <end position="680"/>
    </location>
</feature>
<feature type="repeat" description="WD 4">
    <location>
        <begin position="685"/>
        <end position="724"/>
    </location>
</feature>
<feature type="repeat" description="WD 5">
    <location>
        <begin position="735"/>
        <end position="774"/>
    </location>
</feature>
<feature type="repeat" description="WD 6">
    <location>
        <begin position="779"/>
        <end position="818"/>
    </location>
</feature>
<feature type="region of interest" description="Binding activity">
    <location>
        <begin position="1"/>
        <end position="163"/>
    </location>
</feature>
<feature type="region of interest" description="Disordered" evidence="4">
    <location>
        <begin position="108"/>
        <end position="158"/>
    </location>
</feature>
<feature type="region of interest" description="Disordered" evidence="4">
    <location>
        <begin position="202"/>
        <end position="273"/>
    </location>
</feature>
<feature type="region of interest" description="Important for interaction with ARHGAP26 AND ARHGAP10" evidence="1">
    <location>
        <begin position="203"/>
        <end position="249"/>
    </location>
</feature>
<feature type="region of interest" description="Disordered" evidence="4">
    <location>
        <begin position="309"/>
        <end position="341"/>
    </location>
</feature>
<feature type="region of interest" description="Important for interaction with RAB11A" evidence="1">
    <location>
        <begin position="326"/>
        <end position="339"/>
    </location>
</feature>
<feature type="region of interest" description="Disordered" evidence="4">
    <location>
        <begin position="391"/>
        <end position="418"/>
    </location>
</feature>
<feature type="region of interest" description="Disordered" evidence="4">
    <location>
        <begin position="454"/>
        <end position="474"/>
    </location>
</feature>
<feature type="region of interest" description="Disordered" evidence="4">
    <location>
        <begin position="552"/>
        <end position="587"/>
    </location>
</feature>
<feature type="compositionally biased region" description="Polar residues" evidence="4">
    <location>
        <begin position="108"/>
        <end position="120"/>
    </location>
</feature>
<feature type="compositionally biased region" description="Polar residues" evidence="4">
    <location>
        <begin position="148"/>
        <end position="157"/>
    </location>
</feature>
<feature type="compositionally biased region" description="Pro residues" evidence="4">
    <location>
        <begin position="225"/>
        <end position="248"/>
    </location>
</feature>
<feature type="compositionally biased region" description="Basic and acidic residues" evidence="4">
    <location>
        <begin position="254"/>
        <end position="270"/>
    </location>
</feature>
<feature type="compositionally biased region" description="Acidic residues" evidence="4">
    <location>
        <begin position="462"/>
        <end position="471"/>
    </location>
</feature>
<feature type="compositionally biased region" description="Low complexity" evidence="4">
    <location>
        <begin position="556"/>
        <end position="568"/>
    </location>
</feature>
<feature type="modified residue" description="Phosphoserine" evidence="1">
    <location>
        <position position="17"/>
    </location>
</feature>
<feature type="modified residue" description="Phosphoserine" evidence="8">
    <location>
        <position position="40"/>
    </location>
</feature>
<feature type="modified residue" description="Phosphoserine" evidence="1">
    <location>
        <position position="61"/>
    </location>
</feature>
<feature type="modified residue" description="Phosphoserine" evidence="1">
    <location>
        <position position="71"/>
    </location>
</feature>
<feature type="modified residue" description="Phosphoserine" evidence="1">
    <location>
        <position position="86"/>
    </location>
</feature>
<feature type="modified residue" description="Phosphoserine" evidence="1">
    <location>
        <position position="116"/>
    </location>
</feature>
<feature type="modified residue" description="Phosphothreonine" evidence="1">
    <location>
        <position position="151"/>
    </location>
</feature>
<feature type="modified residue" description="Phosphothreonine" evidence="1">
    <location>
        <position position="211"/>
    </location>
</feature>
<feature type="modified residue" description="Phosphoserine" evidence="1">
    <location>
        <position position="254"/>
    </location>
</feature>
<feature type="modified residue" description="Phosphothreonine" evidence="1">
    <location>
        <position position="263"/>
    </location>
</feature>
<feature type="modified residue" description="Phosphoserine" evidence="1">
    <location>
        <position position="334"/>
    </location>
</feature>
<feature type="modified residue" description="Phosphoserine" evidence="1">
    <location>
        <position position="336"/>
    </location>
</feature>
<feature type="modified residue" description="Phosphothreonine" evidence="1">
    <location>
        <position position="341"/>
    </location>
</feature>
<feature type="modified residue" description="Phosphothreonine" evidence="8">
    <location>
        <position position="396"/>
    </location>
</feature>
<feature type="modified residue" description="Phosphoserine" evidence="8">
    <location>
        <position position="398"/>
    </location>
</feature>
<feature type="modified residue" description="Phosphoserine" evidence="8">
    <location>
        <position position="465"/>
    </location>
</feature>
<feature type="modified residue" description="Phosphoserine" evidence="8">
    <location>
        <position position="466"/>
    </location>
</feature>
<feature type="modified residue" description="Phosphoserine" evidence="8">
    <location>
        <position position="467"/>
    </location>
</feature>
<feature type="modified residue" description="Phosphotyrosine" evidence="2">
    <location>
        <position position="474"/>
    </location>
</feature>
<feature type="modified residue" description="Phosphoserine" evidence="8">
    <location>
        <position position="556"/>
    </location>
</feature>
<feature type="modified residue" description="Phosphoserine" evidence="1">
    <location>
        <position position="560"/>
    </location>
</feature>
<accession>Q9R037</accession>